<evidence type="ECO:0000255" key="1">
    <source>
        <dbReference type="HAMAP-Rule" id="MF_00339"/>
    </source>
</evidence>
<sequence length="322" mass="34840">MKKIAVLTSGGDSPGMNAAVRAVVRTAIYNEIEVYGVYHGYQGLLNDDIHKLELGSVGDTIQRGGTFLYSARCPEFKEQEVRKVAIENLRKRGIEGLVVIGGDGSYRGAQRISEECKEIQTIGIPGTIDNDINGTDFTIGFDTALNTIIGLVDKIRDTASSHARTFIIEAMGRDCGDLALWAGLSVGAETIVVPEVKTDIKEIADKIEQGIKRGKKHSIVLVAEGCMTAQDCQKELSQYINVDNRVSVLGHVQRGGSPTGADRVLASRLGGYAVDLLMQGETAKGVGIKNNKIVATSFDEIFDGKDHKFDYSLYELANKLSI</sequence>
<organism>
    <name type="scientific">Staphylococcus aureus (strain MSSA476)</name>
    <dbReference type="NCBI Taxonomy" id="282459"/>
    <lineage>
        <taxon>Bacteria</taxon>
        <taxon>Bacillati</taxon>
        <taxon>Bacillota</taxon>
        <taxon>Bacilli</taxon>
        <taxon>Bacillales</taxon>
        <taxon>Staphylococcaceae</taxon>
        <taxon>Staphylococcus</taxon>
    </lineage>
</organism>
<keyword id="KW-0021">Allosteric enzyme</keyword>
<keyword id="KW-0067">ATP-binding</keyword>
<keyword id="KW-0963">Cytoplasm</keyword>
<keyword id="KW-0324">Glycolysis</keyword>
<keyword id="KW-0418">Kinase</keyword>
<keyword id="KW-0460">Magnesium</keyword>
<keyword id="KW-0479">Metal-binding</keyword>
<keyword id="KW-0547">Nucleotide-binding</keyword>
<keyword id="KW-0808">Transferase</keyword>
<name>PFKA_STAAS</name>
<feature type="chain" id="PRO_0000111980" description="ATP-dependent 6-phosphofructokinase">
    <location>
        <begin position="1"/>
        <end position="322"/>
    </location>
</feature>
<feature type="active site" description="Proton acceptor" evidence="1">
    <location>
        <position position="129"/>
    </location>
</feature>
<feature type="binding site" evidence="1">
    <location>
        <position position="11"/>
    </location>
    <ligand>
        <name>ATP</name>
        <dbReference type="ChEBI" id="CHEBI:30616"/>
    </ligand>
</feature>
<feature type="binding site" evidence="1">
    <location>
        <begin position="21"/>
        <end position="25"/>
    </location>
    <ligand>
        <name>ADP</name>
        <dbReference type="ChEBI" id="CHEBI:456216"/>
        <note>allosteric activator; ligand shared between dimeric partners</note>
    </ligand>
</feature>
<feature type="binding site" evidence="1">
    <location>
        <begin position="72"/>
        <end position="73"/>
    </location>
    <ligand>
        <name>ATP</name>
        <dbReference type="ChEBI" id="CHEBI:30616"/>
    </ligand>
</feature>
<feature type="binding site" evidence="1">
    <location>
        <begin position="102"/>
        <end position="105"/>
    </location>
    <ligand>
        <name>ATP</name>
        <dbReference type="ChEBI" id="CHEBI:30616"/>
    </ligand>
</feature>
<feature type="binding site" evidence="1">
    <location>
        <position position="103"/>
    </location>
    <ligand>
        <name>Mg(2+)</name>
        <dbReference type="ChEBI" id="CHEBI:18420"/>
        <note>catalytic</note>
    </ligand>
</feature>
<feature type="binding site" description="in other chain" evidence="1">
    <location>
        <begin position="127"/>
        <end position="129"/>
    </location>
    <ligand>
        <name>substrate</name>
        <note>ligand shared between dimeric partners</note>
    </ligand>
</feature>
<feature type="binding site" description="in other chain" evidence="1">
    <location>
        <position position="156"/>
    </location>
    <ligand>
        <name>ADP</name>
        <dbReference type="ChEBI" id="CHEBI:456216"/>
        <note>allosteric activator; ligand shared between dimeric partners</note>
    </ligand>
</feature>
<feature type="binding site" evidence="1">
    <location>
        <position position="164"/>
    </location>
    <ligand>
        <name>substrate</name>
        <note>ligand shared between dimeric partners</note>
    </ligand>
</feature>
<feature type="binding site" description="in other chain" evidence="1">
    <location>
        <begin position="171"/>
        <end position="173"/>
    </location>
    <ligand>
        <name>substrate</name>
        <note>ligand shared between dimeric partners</note>
    </ligand>
</feature>
<feature type="binding site" description="in other chain" evidence="1">
    <location>
        <begin position="187"/>
        <end position="189"/>
    </location>
    <ligand>
        <name>ADP</name>
        <dbReference type="ChEBI" id="CHEBI:456216"/>
        <note>allosteric activator; ligand shared between dimeric partners</note>
    </ligand>
</feature>
<feature type="binding site" description="in other chain" evidence="1">
    <location>
        <position position="213"/>
    </location>
    <ligand>
        <name>ADP</name>
        <dbReference type="ChEBI" id="CHEBI:456216"/>
        <note>allosteric activator; ligand shared between dimeric partners</note>
    </ligand>
</feature>
<feature type="binding site" description="in other chain" evidence="1">
    <location>
        <begin position="215"/>
        <end position="217"/>
    </location>
    <ligand>
        <name>ADP</name>
        <dbReference type="ChEBI" id="CHEBI:456216"/>
        <note>allosteric activator; ligand shared between dimeric partners</note>
    </ligand>
</feature>
<feature type="binding site" description="in other chain" evidence="1">
    <location>
        <position position="224"/>
    </location>
    <ligand>
        <name>substrate</name>
        <note>ligand shared between dimeric partners</note>
    </ligand>
</feature>
<feature type="binding site" evidence="1">
    <location>
        <position position="245"/>
    </location>
    <ligand>
        <name>substrate</name>
        <note>ligand shared between dimeric partners</note>
    </ligand>
</feature>
<feature type="binding site" description="in other chain" evidence="1">
    <location>
        <begin position="251"/>
        <end position="254"/>
    </location>
    <ligand>
        <name>substrate</name>
        <note>ligand shared between dimeric partners</note>
    </ligand>
</feature>
<proteinExistence type="inferred from homology"/>
<protein>
    <recommendedName>
        <fullName evidence="1">ATP-dependent 6-phosphofructokinase</fullName>
        <shortName evidence="1">ATP-PFK</shortName>
        <shortName evidence="1">Phosphofructokinase</shortName>
        <ecNumber evidence="1">2.7.1.11</ecNumber>
    </recommendedName>
    <alternativeName>
        <fullName evidence="1">Phosphohexokinase</fullName>
    </alternativeName>
</protein>
<dbReference type="EC" id="2.7.1.11" evidence="1"/>
<dbReference type="EMBL" id="BX571857">
    <property type="protein sequence ID" value="CAG43428.1"/>
    <property type="molecule type" value="Genomic_DNA"/>
</dbReference>
<dbReference type="RefSeq" id="WP_000717561.1">
    <property type="nucleotide sequence ID" value="NC_002953.3"/>
</dbReference>
<dbReference type="SMR" id="Q6G8M8"/>
<dbReference type="KEGG" id="sas:SAS1626"/>
<dbReference type="HOGENOM" id="CLU_020655_0_1_9"/>
<dbReference type="UniPathway" id="UPA00109">
    <property type="reaction ID" value="UER00182"/>
</dbReference>
<dbReference type="GO" id="GO:0005945">
    <property type="term" value="C:6-phosphofructokinase complex"/>
    <property type="evidence" value="ECO:0007669"/>
    <property type="project" value="TreeGrafter"/>
</dbReference>
<dbReference type="GO" id="GO:0003872">
    <property type="term" value="F:6-phosphofructokinase activity"/>
    <property type="evidence" value="ECO:0007669"/>
    <property type="project" value="UniProtKB-UniRule"/>
</dbReference>
<dbReference type="GO" id="GO:0016208">
    <property type="term" value="F:AMP binding"/>
    <property type="evidence" value="ECO:0007669"/>
    <property type="project" value="TreeGrafter"/>
</dbReference>
<dbReference type="GO" id="GO:0005524">
    <property type="term" value="F:ATP binding"/>
    <property type="evidence" value="ECO:0007669"/>
    <property type="project" value="UniProtKB-KW"/>
</dbReference>
<dbReference type="GO" id="GO:0070095">
    <property type="term" value="F:fructose-6-phosphate binding"/>
    <property type="evidence" value="ECO:0007669"/>
    <property type="project" value="TreeGrafter"/>
</dbReference>
<dbReference type="GO" id="GO:0042802">
    <property type="term" value="F:identical protein binding"/>
    <property type="evidence" value="ECO:0007669"/>
    <property type="project" value="TreeGrafter"/>
</dbReference>
<dbReference type="GO" id="GO:0046872">
    <property type="term" value="F:metal ion binding"/>
    <property type="evidence" value="ECO:0007669"/>
    <property type="project" value="UniProtKB-KW"/>
</dbReference>
<dbReference type="GO" id="GO:0048029">
    <property type="term" value="F:monosaccharide binding"/>
    <property type="evidence" value="ECO:0007669"/>
    <property type="project" value="TreeGrafter"/>
</dbReference>
<dbReference type="GO" id="GO:0061621">
    <property type="term" value="P:canonical glycolysis"/>
    <property type="evidence" value="ECO:0007669"/>
    <property type="project" value="TreeGrafter"/>
</dbReference>
<dbReference type="GO" id="GO:0030388">
    <property type="term" value="P:fructose 1,6-bisphosphate metabolic process"/>
    <property type="evidence" value="ECO:0007669"/>
    <property type="project" value="TreeGrafter"/>
</dbReference>
<dbReference type="GO" id="GO:0006002">
    <property type="term" value="P:fructose 6-phosphate metabolic process"/>
    <property type="evidence" value="ECO:0007669"/>
    <property type="project" value="InterPro"/>
</dbReference>
<dbReference type="FunFam" id="3.40.50.450:FF:000001">
    <property type="entry name" value="ATP-dependent 6-phosphofructokinase"/>
    <property type="match status" value="1"/>
</dbReference>
<dbReference type="FunFam" id="3.40.50.460:FF:000002">
    <property type="entry name" value="ATP-dependent 6-phosphofructokinase"/>
    <property type="match status" value="1"/>
</dbReference>
<dbReference type="Gene3D" id="3.40.50.450">
    <property type="match status" value="1"/>
</dbReference>
<dbReference type="Gene3D" id="3.40.50.460">
    <property type="entry name" value="Phosphofructokinase domain"/>
    <property type="match status" value="1"/>
</dbReference>
<dbReference type="HAMAP" id="MF_00339">
    <property type="entry name" value="Phosphofructokinase_I_B1"/>
    <property type="match status" value="1"/>
</dbReference>
<dbReference type="InterPro" id="IPR022953">
    <property type="entry name" value="ATP_PFK"/>
</dbReference>
<dbReference type="InterPro" id="IPR012003">
    <property type="entry name" value="ATP_PFK_prok-type"/>
</dbReference>
<dbReference type="InterPro" id="IPR012828">
    <property type="entry name" value="PFKA_ATP_prok"/>
</dbReference>
<dbReference type="InterPro" id="IPR015912">
    <property type="entry name" value="Phosphofructokinase_CS"/>
</dbReference>
<dbReference type="InterPro" id="IPR000023">
    <property type="entry name" value="Phosphofructokinase_dom"/>
</dbReference>
<dbReference type="InterPro" id="IPR035966">
    <property type="entry name" value="PKF_sf"/>
</dbReference>
<dbReference type="NCBIfam" id="TIGR02482">
    <property type="entry name" value="PFKA_ATP"/>
    <property type="match status" value="1"/>
</dbReference>
<dbReference type="NCBIfam" id="NF002872">
    <property type="entry name" value="PRK03202.1"/>
    <property type="match status" value="1"/>
</dbReference>
<dbReference type="PANTHER" id="PTHR13697:SF4">
    <property type="entry name" value="ATP-DEPENDENT 6-PHOSPHOFRUCTOKINASE"/>
    <property type="match status" value="1"/>
</dbReference>
<dbReference type="PANTHER" id="PTHR13697">
    <property type="entry name" value="PHOSPHOFRUCTOKINASE"/>
    <property type="match status" value="1"/>
</dbReference>
<dbReference type="Pfam" id="PF00365">
    <property type="entry name" value="PFK"/>
    <property type="match status" value="1"/>
</dbReference>
<dbReference type="PIRSF" id="PIRSF000532">
    <property type="entry name" value="ATP_PFK_prok"/>
    <property type="match status" value="1"/>
</dbReference>
<dbReference type="PRINTS" id="PR00476">
    <property type="entry name" value="PHFRCTKINASE"/>
</dbReference>
<dbReference type="SUPFAM" id="SSF53784">
    <property type="entry name" value="Phosphofructokinase"/>
    <property type="match status" value="1"/>
</dbReference>
<dbReference type="PROSITE" id="PS00433">
    <property type="entry name" value="PHOSPHOFRUCTOKINASE"/>
    <property type="match status" value="1"/>
</dbReference>
<accession>Q6G8M8</accession>
<reference key="1">
    <citation type="journal article" date="2004" name="Proc. Natl. Acad. Sci. U.S.A.">
        <title>Complete genomes of two clinical Staphylococcus aureus strains: evidence for the rapid evolution of virulence and drug resistance.</title>
        <authorList>
            <person name="Holden M.T.G."/>
            <person name="Feil E.J."/>
            <person name="Lindsay J.A."/>
            <person name="Peacock S.J."/>
            <person name="Day N.P.J."/>
            <person name="Enright M.C."/>
            <person name="Foster T.J."/>
            <person name="Moore C.E."/>
            <person name="Hurst L."/>
            <person name="Atkin R."/>
            <person name="Barron A."/>
            <person name="Bason N."/>
            <person name="Bentley S.D."/>
            <person name="Chillingworth C."/>
            <person name="Chillingworth T."/>
            <person name="Churcher C."/>
            <person name="Clark L."/>
            <person name="Corton C."/>
            <person name="Cronin A."/>
            <person name="Doggett J."/>
            <person name="Dowd L."/>
            <person name="Feltwell T."/>
            <person name="Hance Z."/>
            <person name="Harris B."/>
            <person name="Hauser H."/>
            <person name="Holroyd S."/>
            <person name="Jagels K."/>
            <person name="James K.D."/>
            <person name="Lennard N."/>
            <person name="Line A."/>
            <person name="Mayes R."/>
            <person name="Moule S."/>
            <person name="Mungall K."/>
            <person name="Ormond D."/>
            <person name="Quail M.A."/>
            <person name="Rabbinowitsch E."/>
            <person name="Rutherford K.M."/>
            <person name="Sanders M."/>
            <person name="Sharp S."/>
            <person name="Simmonds M."/>
            <person name="Stevens K."/>
            <person name="Whitehead S."/>
            <person name="Barrell B.G."/>
            <person name="Spratt B.G."/>
            <person name="Parkhill J."/>
        </authorList>
    </citation>
    <scope>NUCLEOTIDE SEQUENCE [LARGE SCALE GENOMIC DNA]</scope>
    <source>
        <strain>MSSA476</strain>
    </source>
</reference>
<gene>
    <name evidence="1" type="primary">pfkA</name>
    <name type="synonym">pfk</name>
    <name type="ordered locus">SAS1626</name>
</gene>
<comment type="function">
    <text evidence="1">Catalyzes the phosphorylation of D-fructose 6-phosphate to fructose 1,6-bisphosphate by ATP, the first committing step of glycolysis.</text>
</comment>
<comment type="catalytic activity">
    <reaction evidence="1">
        <text>beta-D-fructose 6-phosphate + ATP = beta-D-fructose 1,6-bisphosphate + ADP + H(+)</text>
        <dbReference type="Rhea" id="RHEA:16109"/>
        <dbReference type="ChEBI" id="CHEBI:15378"/>
        <dbReference type="ChEBI" id="CHEBI:30616"/>
        <dbReference type="ChEBI" id="CHEBI:32966"/>
        <dbReference type="ChEBI" id="CHEBI:57634"/>
        <dbReference type="ChEBI" id="CHEBI:456216"/>
        <dbReference type="EC" id="2.7.1.11"/>
    </reaction>
</comment>
<comment type="cofactor">
    <cofactor evidence="1">
        <name>Mg(2+)</name>
        <dbReference type="ChEBI" id="CHEBI:18420"/>
    </cofactor>
</comment>
<comment type="activity regulation">
    <text evidence="1">Allosterically activated by ADP and other diphosphonucleosides, and allosterically inhibited by phosphoenolpyruvate.</text>
</comment>
<comment type="pathway">
    <text evidence="1">Carbohydrate degradation; glycolysis; D-glyceraldehyde 3-phosphate and glycerone phosphate from D-glucose: step 3/4.</text>
</comment>
<comment type="subunit">
    <text evidence="1">Homotetramer.</text>
</comment>
<comment type="subcellular location">
    <subcellularLocation>
        <location evidence="1">Cytoplasm</location>
    </subcellularLocation>
</comment>
<comment type="similarity">
    <text evidence="1">Belongs to the phosphofructokinase type A (PFKA) family. ATP-dependent PFK group I subfamily. Prokaryotic clade 'B1' sub-subfamily.</text>
</comment>